<gene>
    <name type="ordered locus">Rxyl_2009</name>
</gene>
<evidence type="ECO:0000255" key="1">
    <source>
        <dbReference type="HAMAP-Rule" id="MF_00636"/>
    </source>
</evidence>
<dbReference type="EMBL" id="CP000386">
    <property type="protein sequence ID" value="ABG04956.1"/>
    <property type="molecule type" value="Genomic_DNA"/>
</dbReference>
<dbReference type="RefSeq" id="WP_011564971.1">
    <property type="nucleotide sequence ID" value="NC_008148.1"/>
</dbReference>
<dbReference type="SMR" id="Q1AUH2"/>
<dbReference type="STRING" id="266117.Rxyl_2009"/>
<dbReference type="KEGG" id="rxy:Rxyl_2009"/>
<dbReference type="eggNOG" id="COG1660">
    <property type="taxonomic scope" value="Bacteria"/>
</dbReference>
<dbReference type="HOGENOM" id="CLU_059558_0_0_11"/>
<dbReference type="OrthoDB" id="9784461at2"/>
<dbReference type="PhylomeDB" id="Q1AUH2"/>
<dbReference type="Proteomes" id="UP000006637">
    <property type="component" value="Chromosome"/>
</dbReference>
<dbReference type="GO" id="GO:0005524">
    <property type="term" value="F:ATP binding"/>
    <property type="evidence" value="ECO:0007669"/>
    <property type="project" value="UniProtKB-UniRule"/>
</dbReference>
<dbReference type="GO" id="GO:0005525">
    <property type="term" value="F:GTP binding"/>
    <property type="evidence" value="ECO:0007669"/>
    <property type="project" value="UniProtKB-UniRule"/>
</dbReference>
<dbReference type="Gene3D" id="3.40.50.300">
    <property type="entry name" value="P-loop containing nucleotide triphosphate hydrolases"/>
    <property type="match status" value="1"/>
</dbReference>
<dbReference type="HAMAP" id="MF_00636">
    <property type="entry name" value="RapZ_like"/>
    <property type="match status" value="1"/>
</dbReference>
<dbReference type="InterPro" id="IPR027417">
    <property type="entry name" value="P-loop_NTPase"/>
</dbReference>
<dbReference type="InterPro" id="IPR005337">
    <property type="entry name" value="RapZ-like"/>
</dbReference>
<dbReference type="InterPro" id="IPR053930">
    <property type="entry name" value="RapZ-like_N"/>
</dbReference>
<dbReference type="InterPro" id="IPR053931">
    <property type="entry name" value="RapZ_C"/>
</dbReference>
<dbReference type="NCBIfam" id="NF003828">
    <property type="entry name" value="PRK05416.1"/>
    <property type="match status" value="1"/>
</dbReference>
<dbReference type="PANTHER" id="PTHR30448">
    <property type="entry name" value="RNASE ADAPTER PROTEIN RAPZ"/>
    <property type="match status" value="1"/>
</dbReference>
<dbReference type="PANTHER" id="PTHR30448:SF0">
    <property type="entry name" value="RNASE ADAPTER PROTEIN RAPZ"/>
    <property type="match status" value="1"/>
</dbReference>
<dbReference type="Pfam" id="PF22740">
    <property type="entry name" value="PapZ_C"/>
    <property type="match status" value="1"/>
</dbReference>
<dbReference type="Pfam" id="PF03668">
    <property type="entry name" value="RapZ-like_N"/>
    <property type="match status" value="1"/>
</dbReference>
<dbReference type="PIRSF" id="PIRSF005052">
    <property type="entry name" value="P-loopkin"/>
    <property type="match status" value="1"/>
</dbReference>
<dbReference type="SUPFAM" id="SSF52540">
    <property type="entry name" value="P-loop containing nucleoside triphosphate hydrolases"/>
    <property type="match status" value="1"/>
</dbReference>
<accession>Q1AUH2</accession>
<protein>
    <recommendedName>
        <fullName evidence="1">Nucleotide-binding protein Rxyl_2009</fullName>
    </recommendedName>
</protein>
<proteinExistence type="inferred from homology"/>
<sequence>MSEEAPHPTRTPAAQRRQIVVITGLSGAGKSNALRAFEDAGYFCIDNLPPRMIPEVMEMSAGSPAGPEGVVVVADIRGRRYFGGELERVIDGVEGAGGWEKRLLFLEADDATLIRRYKESRRPHPAARGGDVLEAIRSERRELAPLRERADVVVDTSGLSALDVRLRFKRLAESLSGRLTVSLISFGFKHGAPLDVDTLFDVRFLPNPHYDPALRPLTGRDPAVREAVLAHPDAREFVERVCGLLSFLIPRYAAEGKTYFTVGVGCTGGRHRSVAIAEELARRLGAGRIGGEVDLYVRHRDLESG</sequence>
<feature type="chain" id="PRO_0000258994" description="Nucleotide-binding protein Rxyl_2009">
    <location>
        <begin position="1"/>
        <end position="305"/>
    </location>
</feature>
<feature type="binding site" evidence="1">
    <location>
        <begin position="24"/>
        <end position="31"/>
    </location>
    <ligand>
        <name>ATP</name>
        <dbReference type="ChEBI" id="CHEBI:30616"/>
    </ligand>
</feature>
<feature type="binding site" evidence="1">
    <location>
        <begin position="75"/>
        <end position="78"/>
    </location>
    <ligand>
        <name>GTP</name>
        <dbReference type="ChEBI" id="CHEBI:37565"/>
    </ligand>
</feature>
<name>Y2009_RUBXD</name>
<organism>
    <name type="scientific">Rubrobacter xylanophilus (strain DSM 9941 / JCM 11954 / NBRC 16129 / PRD-1)</name>
    <dbReference type="NCBI Taxonomy" id="266117"/>
    <lineage>
        <taxon>Bacteria</taxon>
        <taxon>Bacillati</taxon>
        <taxon>Actinomycetota</taxon>
        <taxon>Rubrobacteria</taxon>
        <taxon>Rubrobacterales</taxon>
        <taxon>Rubrobacteraceae</taxon>
        <taxon>Rubrobacter</taxon>
    </lineage>
</organism>
<reference key="1">
    <citation type="submission" date="2006-06" db="EMBL/GenBank/DDBJ databases">
        <title>Complete sequence of Rubrobacter xylanophilus DSM 9941.</title>
        <authorList>
            <consortium name="US DOE Joint Genome Institute"/>
            <person name="Copeland A."/>
            <person name="Lucas S."/>
            <person name="Lapidus A."/>
            <person name="Barry K."/>
            <person name="Detter J.C."/>
            <person name="Glavina del Rio T."/>
            <person name="Hammon N."/>
            <person name="Israni S."/>
            <person name="Dalin E."/>
            <person name="Tice H."/>
            <person name="Pitluck S."/>
            <person name="Munk A.C."/>
            <person name="Brettin T."/>
            <person name="Bruce D."/>
            <person name="Han C."/>
            <person name="Tapia R."/>
            <person name="Gilna P."/>
            <person name="Schmutz J."/>
            <person name="Larimer F."/>
            <person name="Land M."/>
            <person name="Hauser L."/>
            <person name="Kyrpides N."/>
            <person name="Lykidis A."/>
            <person name="da Costa M.S."/>
            <person name="Rainey F.A."/>
            <person name="Empadinhas N."/>
            <person name="Jolivet E."/>
            <person name="Battista J.R."/>
            <person name="Richardson P."/>
        </authorList>
    </citation>
    <scope>NUCLEOTIDE SEQUENCE [LARGE SCALE GENOMIC DNA]</scope>
    <source>
        <strain>DSM 9941 / JCM 11954 / NBRC 16129 / PRD-1</strain>
    </source>
</reference>
<comment type="function">
    <text evidence="1">Displays ATPase and GTPase activities.</text>
</comment>
<comment type="similarity">
    <text evidence="1">Belongs to the RapZ-like family.</text>
</comment>
<keyword id="KW-0067">ATP-binding</keyword>
<keyword id="KW-0342">GTP-binding</keyword>
<keyword id="KW-0547">Nucleotide-binding</keyword>
<keyword id="KW-1185">Reference proteome</keyword>